<reference key="1">
    <citation type="journal article" date="2004" name="J. Bacteriol.">
        <title>Complete genome sequence of Rickettsia typhi and comparison with sequences of other Rickettsiae.</title>
        <authorList>
            <person name="McLeod M.P."/>
            <person name="Qin X."/>
            <person name="Karpathy S.E."/>
            <person name="Gioia J."/>
            <person name="Highlander S.K."/>
            <person name="Fox G.E."/>
            <person name="McNeill T.Z."/>
            <person name="Jiang H."/>
            <person name="Muzny D."/>
            <person name="Jacob L.S."/>
            <person name="Hawes A.C."/>
            <person name="Sodergren E."/>
            <person name="Gill R."/>
            <person name="Hume J."/>
            <person name="Morgan M."/>
            <person name="Fan G."/>
            <person name="Amin A.G."/>
            <person name="Gibbs R.A."/>
            <person name="Hong C."/>
            <person name="Yu X.-J."/>
            <person name="Walker D.H."/>
            <person name="Weinstock G.M."/>
        </authorList>
    </citation>
    <scope>NUCLEOTIDE SEQUENCE [LARGE SCALE GENOMIC DNA]</scope>
    <source>
        <strain>ATCC VR-144 / Wilmington</strain>
    </source>
</reference>
<organism>
    <name type="scientific">Rickettsia typhi (strain ATCC VR-144 / Wilmington)</name>
    <dbReference type="NCBI Taxonomy" id="257363"/>
    <lineage>
        <taxon>Bacteria</taxon>
        <taxon>Pseudomonadati</taxon>
        <taxon>Pseudomonadota</taxon>
        <taxon>Alphaproteobacteria</taxon>
        <taxon>Rickettsiales</taxon>
        <taxon>Rickettsiaceae</taxon>
        <taxon>Rickettsieae</taxon>
        <taxon>Rickettsia</taxon>
        <taxon>typhus group</taxon>
    </lineage>
</organism>
<accession>Q68W27</accession>
<evidence type="ECO:0000255" key="1">
    <source>
        <dbReference type="HAMAP-Rule" id="MF_01588"/>
    </source>
</evidence>
<sequence length="693" mass="78483">MQNIDLISEKEAKKLLEELADKIAMYNHAYYIEDNPLVSDSEYDQLFNLNLKLENTFPHLVLSNSPSKKIGAKITNKFAKVIHQAPMLSLSNAFDEEDIRDFLERIKNFLRINEFTPIFCEPKIDGLSFSAIYKHGLFITGATRGDGYVGEDITINIKTIKNFPHKIDNAPEFLEVRGEIYIEKQDFVNLNKEQEAQNRGKFANPRNAAAGSIRQLDVAITAQRPLKYFIYSGGVTEKNLASTQEQLLAKLKALSFSVNEISKLASSEEEIFAFYEYLKTNRHNLPYEIDGVVYKLNNFAMQNRMGFIARSPRFAIAHKFPAIIGQTKLLSITVQVGRTGMLTPVAELDPLEIGGVVVSRATLHNFQDIARKDVRIKDYVFLQRAGDVIPQITGVDISKRSNDTVKFDTPVFCPSCNSKLRYVSEDIIIRCDNGLNCPAQNYERICHFVSKNAMDIAGLGRKQVAFLIDKRLISNPLDIFFLKKKNETNLIRLENMDGWGKKSVANLWQNIEKSQKISLQRFIYALGIRHIGEQNAKLLAREFVSYNNFIAQMELLSKNDSDVYQKLNDLEGIGDKMLVDIIDFFYVKENIQLIKKLGAVLNIEDYKETREQNILTGKILVFTGSLKTISRVEAKEIAEKLGAKVASSVSSNTDLLIVGVNGGSKLKKAKELNIKIIDEAEWLAFIKCLEKEV</sequence>
<protein>
    <recommendedName>
        <fullName evidence="1">DNA ligase</fullName>
        <ecNumber evidence="1">6.5.1.2</ecNumber>
    </recommendedName>
    <alternativeName>
        <fullName evidence="1">Polydeoxyribonucleotide synthase [NAD(+)]</fullName>
    </alternativeName>
</protein>
<keyword id="KW-0227">DNA damage</keyword>
<keyword id="KW-0234">DNA repair</keyword>
<keyword id="KW-0235">DNA replication</keyword>
<keyword id="KW-0436">Ligase</keyword>
<keyword id="KW-0460">Magnesium</keyword>
<keyword id="KW-0464">Manganese</keyword>
<keyword id="KW-0479">Metal-binding</keyword>
<keyword id="KW-0520">NAD</keyword>
<keyword id="KW-0862">Zinc</keyword>
<proteinExistence type="inferred from homology"/>
<dbReference type="EC" id="6.5.1.2" evidence="1"/>
<dbReference type="EMBL" id="AE017197">
    <property type="protein sequence ID" value="AAU04165.1"/>
    <property type="molecule type" value="Genomic_DNA"/>
</dbReference>
<dbReference type="RefSeq" id="WP_011191142.1">
    <property type="nucleotide sequence ID" value="NC_006142.1"/>
</dbReference>
<dbReference type="SMR" id="Q68W27"/>
<dbReference type="KEGG" id="rty:RT0706"/>
<dbReference type="eggNOG" id="COG0272">
    <property type="taxonomic scope" value="Bacteria"/>
</dbReference>
<dbReference type="HOGENOM" id="CLU_007764_2_1_5"/>
<dbReference type="OrthoDB" id="9759736at2"/>
<dbReference type="Proteomes" id="UP000000604">
    <property type="component" value="Chromosome"/>
</dbReference>
<dbReference type="GO" id="GO:0005829">
    <property type="term" value="C:cytosol"/>
    <property type="evidence" value="ECO:0007669"/>
    <property type="project" value="TreeGrafter"/>
</dbReference>
<dbReference type="GO" id="GO:0003911">
    <property type="term" value="F:DNA ligase (NAD+) activity"/>
    <property type="evidence" value="ECO:0007669"/>
    <property type="project" value="UniProtKB-UniRule"/>
</dbReference>
<dbReference type="GO" id="GO:0046872">
    <property type="term" value="F:metal ion binding"/>
    <property type="evidence" value="ECO:0007669"/>
    <property type="project" value="UniProtKB-KW"/>
</dbReference>
<dbReference type="GO" id="GO:0006281">
    <property type="term" value="P:DNA repair"/>
    <property type="evidence" value="ECO:0007669"/>
    <property type="project" value="UniProtKB-KW"/>
</dbReference>
<dbReference type="GO" id="GO:0006260">
    <property type="term" value="P:DNA replication"/>
    <property type="evidence" value="ECO:0007669"/>
    <property type="project" value="UniProtKB-KW"/>
</dbReference>
<dbReference type="CDD" id="cd17748">
    <property type="entry name" value="BRCT_DNA_ligase_like"/>
    <property type="match status" value="1"/>
</dbReference>
<dbReference type="CDD" id="cd00114">
    <property type="entry name" value="LIGANc"/>
    <property type="match status" value="1"/>
</dbReference>
<dbReference type="FunFam" id="1.10.150.20:FF:000007">
    <property type="entry name" value="DNA ligase"/>
    <property type="match status" value="1"/>
</dbReference>
<dbReference type="FunFam" id="2.40.50.140:FF:000012">
    <property type="entry name" value="DNA ligase"/>
    <property type="match status" value="1"/>
</dbReference>
<dbReference type="FunFam" id="3.30.470.30:FF:000001">
    <property type="entry name" value="DNA ligase"/>
    <property type="match status" value="1"/>
</dbReference>
<dbReference type="Gene3D" id="6.20.10.30">
    <property type="match status" value="1"/>
</dbReference>
<dbReference type="Gene3D" id="1.10.150.20">
    <property type="entry name" value="5' to 3' exonuclease, C-terminal subdomain"/>
    <property type="match status" value="2"/>
</dbReference>
<dbReference type="Gene3D" id="3.40.50.10190">
    <property type="entry name" value="BRCT domain"/>
    <property type="match status" value="1"/>
</dbReference>
<dbReference type="Gene3D" id="3.30.470.30">
    <property type="entry name" value="DNA ligase/mRNA capping enzyme"/>
    <property type="match status" value="1"/>
</dbReference>
<dbReference type="Gene3D" id="1.10.287.610">
    <property type="entry name" value="Helix hairpin bin"/>
    <property type="match status" value="1"/>
</dbReference>
<dbReference type="Gene3D" id="2.40.50.140">
    <property type="entry name" value="Nucleic acid-binding proteins"/>
    <property type="match status" value="1"/>
</dbReference>
<dbReference type="HAMAP" id="MF_01588">
    <property type="entry name" value="DNA_ligase_A"/>
    <property type="match status" value="1"/>
</dbReference>
<dbReference type="InterPro" id="IPR001357">
    <property type="entry name" value="BRCT_dom"/>
</dbReference>
<dbReference type="InterPro" id="IPR036420">
    <property type="entry name" value="BRCT_dom_sf"/>
</dbReference>
<dbReference type="InterPro" id="IPR041663">
    <property type="entry name" value="DisA/LigA_HHH"/>
</dbReference>
<dbReference type="InterPro" id="IPR001679">
    <property type="entry name" value="DNA_ligase"/>
</dbReference>
<dbReference type="InterPro" id="IPR018239">
    <property type="entry name" value="DNA_ligase_AS"/>
</dbReference>
<dbReference type="InterPro" id="IPR013839">
    <property type="entry name" value="DNAligase_adenylation"/>
</dbReference>
<dbReference type="InterPro" id="IPR013840">
    <property type="entry name" value="DNAligase_N"/>
</dbReference>
<dbReference type="InterPro" id="IPR012340">
    <property type="entry name" value="NA-bd_OB-fold"/>
</dbReference>
<dbReference type="InterPro" id="IPR004150">
    <property type="entry name" value="NAD_DNA_ligase_OB"/>
</dbReference>
<dbReference type="InterPro" id="IPR010994">
    <property type="entry name" value="RuvA_2-like"/>
</dbReference>
<dbReference type="InterPro" id="IPR004149">
    <property type="entry name" value="Znf_DNAligase_C4"/>
</dbReference>
<dbReference type="NCBIfam" id="TIGR00575">
    <property type="entry name" value="dnlj"/>
    <property type="match status" value="1"/>
</dbReference>
<dbReference type="NCBIfam" id="NF005932">
    <property type="entry name" value="PRK07956.1"/>
    <property type="match status" value="1"/>
</dbReference>
<dbReference type="PANTHER" id="PTHR23389">
    <property type="entry name" value="CHROMOSOME TRANSMISSION FIDELITY FACTOR 18"/>
    <property type="match status" value="1"/>
</dbReference>
<dbReference type="PANTHER" id="PTHR23389:SF9">
    <property type="entry name" value="DNA LIGASE"/>
    <property type="match status" value="1"/>
</dbReference>
<dbReference type="Pfam" id="PF00533">
    <property type="entry name" value="BRCT"/>
    <property type="match status" value="1"/>
</dbReference>
<dbReference type="Pfam" id="PF01653">
    <property type="entry name" value="DNA_ligase_aden"/>
    <property type="match status" value="1"/>
</dbReference>
<dbReference type="Pfam" id="PF03120">
    <property type="entry name" value="DNA_ligase_OB"/>
    <property type="match status" value="1"/>
</dbReference>
<dbReference type="Pfam" id="PF03119">
    <property type="entry name" value="DNA_ligase_ZBD"/>
    <property type="match status" value="1"/>
</dbReference>
<dbReference type="Pfam" id="PF12826">
    <property type="entry name" value="HHH_2"/>
    <property type="match status" value="1"/>
</dbReference>
<dbReference type="PIRSF" id="PIRSF001604">
    <property type="entry name" value="LigA"/>
    <property type="match status" value="1"/>
</dbReference>
<dbReference type="SMART" id="SM00292">
    <property type="entry name" value="BRCT"/>
    <property type="match status" value="1"/>
</dbReference>
<dbReference type="SMART" id="SM00532">
    <property type="entry name" value="LIGANc"/>
    <property type="match status" value="1"/>
</dbReference>
<dbReference type="SUPFAM" id="SSF52113">
    <property type="entry name" value="BRCT domain"/>
    <property type="match status" value="1"/>
</dbReference>
<dbReference type="SUPFAM" id="SSF56091">
    <property type="entry name" value="DNA ligase/mRNA capping enzyme, catalytic domain"/>
    <property type="match status" value="1"/>
</dbReference>
<dbReference type="SUPFAM" id="SSF50249">
    <property type="entry name" value="Nucleic acid-binding proteins"/>
    <property type="match status" value="1"/>
</dbReference>
<dbReference type="SUPFAM" id="SSF47781">
    <property type="entry name" value="RuvA domain 2-like"/>
    <property type="match status" value="1"/>
</dbReference>
<dbReference type="PROSITE" id="PS50172">
    <property type="entry name" value="BRCT"/>
    <property type="match status" value="1"/>
</dbReference>
<dbReference type="PROSITE" id="PS01055">
    <property type="entry name" value="DNA_LIGASE_N1"/>
    <property type="match status" value="1"/>
</dbReference>
<comment type="function">
    <text evidence="1">DNA ligase that catalyzes the formation of phosphodiester linkages between 5'-phosphoryl and 3'-hydroxyl groups in double-stranded DNA using NAD as a coenzyme and as the energy source for the reaction. It is essential for DNA replication and repair of damaged DNA.</text>
</comment>
<comment type="catalytic activity">
    <reaction evidence="1">
        <text>NAD(+) + (deoxyribonucleotide)n-3'-hydroxyl + 5'-phospho-(deoxyribonucleotide)m = (deoxyribonucleotide)n+m + AMP + beta-nicotinamide D-nucleotide.</text>
        <dbReference type="EC" id="6.5.1.2"/>
    </reaction>
</comment>
<comment type="cofactor">
    <cofactor evidence="1">
        <name>Mg(2+)</name>
        <dbReference type="ChEBI" id="CHEBI:18420"/>
    </cofactor>
    <cofactor evidence="1">
        <name>Mn(2+)</name>
        <dbReference type="ChEBI" id="CHEBI:29035"/>
    </cofactor>
</comment>
<comment type="similarity">
    <text evidence="1">Belongs to the NAD-dependent DNA ligase family. LigA subfamily.</text>
</comment>
<name>DNLJ_RICTY</name>
<gene>
    <name evidence="1" type="primary">ligA</name>
    <name type="synonym">lig</name>
    <name type="ordered locus">RT0706</name>
</gene>
<feature type="chain" id="PRO_0000280948" description="DNA ligase">
    <location>
        <begin position="1"/>
        <end position="693"/>
    </location>
</feature>
<feature type="domain" description="BRCT" evidence="1">
    <location>
        <begin position="610"/>
        <end position="693"/>
    </location>
</feature>
<feature type="active site" description="N6-AMP-lysine intermediate" evidence="1">
    <location>
        <position position="123"/>
    </location>
</feature>
<feature type="binding site" evidence="1">
    <location>
        <begin position="40"/>
        <end position="44"/>
    </location>
    <ligand>
        <name>NAD(+)</name>
        <dbReference type="ChEBI" id="CHEBI:57540"/>
    </ligand>
</feature>
<feature type="binding site" evidence="1">
    <location>
        <begin position="89"/>
        <end position="90"/>
    </location>
    <ligand>
        <name>NAD(+)</name>
        <dbReference type="ChEBI" id="CHEBI:57540"/>
    </ligand>
</feature>
<feature type="binding site" evidence="1">
    <location>
        <position position="121"/>
    </location>
    <ligand>
        <name>NAD(+)</name>
        <dbReference type="ChEBI" id="CHEBI:57540"/>
    </ligand>
</feature>
<feature type="binding site" evidence="1">
    <location>
        <position position="144"/>
    </location>
    <ligand>
        <name>NAD(+)</name>
        <dbReference type="ChEBI" id="CHEBI:57540"/>
    </ligand>
</feature>
<feature type="binding site" evidence="1">
    <location>
        <position position="179"/>
    </location>
    <ligand>
        <name>NAD(+)</name>
        <dbReference type="ChEBI" id="CHEBI:57540"/>
    </ligand>
</feature>
<feature type="binding site" evidence="1">
    <location>
        <position position="295"/>
    </location>
    <ligand>
        <name>NAD(+)</name>
        <dbReference type="ChEBI" id="CHEBI:57540"/>
    </ligand>
</feature>
<feature type="binding site" evidence="1">
    <location>
        <position position="319"/>
    </location>
    <ligand>
        <name>NAD(+)</name>
        <dbReference type="ChEBI" id="CHEBI:57540"/>
    </ligand>
</feature>
<feature type="binding site" evidence="1">
    <location>
        <position position="413"/>
    </location>
    <ligand>
        <name>Zn(2+)</name>
        <dbReference type="ChEBI" id="CHEBI:29105"/>
    </ligand>
</feature>
<feature type="binding site" evidence="1">
    <location>
        <position position="416"/>
    </location>
    <ligand>
        <name>Zn(2+)</name>
        <dbReference type="ChEBI" id="CHEBI:29105"/>
    </ligand>
</feature>
<feature type="binding site" evidence="1">
    <location>
        <position position="431"/>
    </location>
    <ligand>
        <name>Zn(2+)</name>
        <dbReference type="ChEBI" id="CHEBI:29105"/>
    </ligand>
</feature>
<feature type="binding site" evidence="1">
    <location>
        <position position="437"/>
    </location>
    <ligand>
        <name>Zn(2+)</name>
        <dbReference type="ChEBI" id="CHEBI:29105"/>
    </ligand>
</feature>